<accession>A1SUY2</accession>
<feature type="chain" id="PRO_0000292318" description="Pyridoxine/pyridoxamine 5'-phosphate oxidase">
    <location>
        <begin position="1"/>
        <end position="217"/>
    </location>
</feature>
<feature type="binding site" evidence="1">
    <location>
        <begin position="66"/>
        <end position="71"/>
    </location>
    <ligand>
        <name>FMN</name>
        <dbReference type="ChEBI" id="CHEBI:58210"/>
    </ligand>
</feature>
<feature type="binding site" evidence="1">
    <location>
        <position position="71"/>
    </location>
    <ligand>
        <name>substrate</name>
    </ligand>
</feature>
<feature type="binding site" evidence="1">
    <location>
        <begin position="81"/>
        <end position="82"/>
    </location>
    <ligand>
        <name>FMN</name>
        <dbReference type="ChEBI" id="CHEBI:58210"/>
    </ligand>
</feature>
<feature type="binding site" evidence="1">
    <location>
        <position position="87"/>
    </location>
    <ligand>
        <name>FMN</name>
        <dbReference type="ChEBI" id="CHEBI:58210"/>
    </ligand>
</feature>
<feature type="binding site" evidence="1">
    <location>
        <position position="88"/>
    </location>
    <ligand>
        <name>FMN</name>
        <dbReference type="ChEBI" id="CHEBI:58210"/>
    </ligand>
</feature>
<feature type="binding site" evidence="1">
    <location>
        <position position="110"/>
    </location>
    <ligand>
        <name>FMN</name>
        <dbReference type="ChEBI" id="CHEBI:58210"/>
    </ligand>
</feature>
<feature type="binding site" evidence="1">
    <location>
        <position position="128"/>
    </location>
    <ligand>
        <name>substrate</name>
    </ligand>
</feature>
<feature type="binding site" evidence="1">
    <location>
        <position position="132"/>
    </location>
    <ligand>
        <name>substrate</name>
    </ligand>
</feature>
<feature type="binding site" evidence="1">
    <location>
        <position position="136"/>
    </location>
    <ligand>
        <name>substrate</name>
    </ligand>
</feature>
<feature type="binding site" evidence="1">
    <location>
        <begin position="145"/>
        <end position="146"/>
    </location>
    <ligand>
        <name>FMN</name>
        <dbReference type="ChEBI" id="CHEBI:58210"/>
    </ligand>
</feature>
<feature type="binding site" evidence="1">
    <location>
        <position position="190"/>
    </location>
    <ligand>
        <name>FMN</name>
        <dbReference type="ChEBI" id="CHEBI:58210"/>
    </ligand>
</feature>
<feature type="binding site" evidence="1">
    <location>
        <begin position="196"/>
        <end position="198"/>
    </location>
    <ligand>
        <name>substrate</name>
    </ligand>
</feature>
<feature type="binding site" evidence="1">
    <location>
        <position position="200"/>
    </location>
    <ligand>
        <name>FMN</name>
        <dbReference type="ChEBI" id="CHEBI:58210"/>
    </ligand>
</feature>
<comment type="function">
    <text evidence="1">Catalyzes the oxidation of either pyridoxine 5'-phosphate (PNP) or pyridoxamine 5'-phosphate (PMP) into pyridoxal 5'-phosphate (PLP).</text>
</comment>
<comment type="catalytic activity">
    <reaction evidence="1">
        <text>pyridoxamine 5'-phosphate + O2 + H2O = pyridoxal 5'-phosphate + H2O2 + NH4(+)</text>
        <dbReference type="Rhea" id="RHEA:15817"/>
        <dbReference type="ChEBI" id="CHEBI:15377"/>
        <dbReference type="ChEBI" id="CHEBI:15379"/>
        <dbReference type="ChEBI" id="CHEBI:16240"/>
        <dbReference type="ChEBI" id="CHEBI:28938"/>
        <dbReference type="ChEBI" id="CHEBI:58451"/>
        <dbReference type="ChEBI" id="CHEBI:597326"/>
        <dbReference type="EC" id="1.4.3.5"/>
    </reaction>
</comment>
<comment type="catalytic activity">
    <reaction evidence="1">
        <text>pyridoxine 5'-phosphate + O2 = pyridoxal 5'-phosphate + H2O2</text>
        <dbReference type="Rhea" id="RHEA:15149"/>
        <dbReference type="ChEBI" id="CHEBI:15379"/>
        <dbReference type="ChEBI" id="CHEBI:16240"/>
        <dbReference type="ChEBI" id="CHEBI:58589"/>
        <dbReference type="ChEBI" id="CHEBI:597326"/>
        <dbReference type="EC" id="1.4.3.5"/>
    </reaction>
</comment>
<comment type="cofactor">
    <cofactor evidence="1">
        <name>FMN</name>
        <dbReference type="ChEBI" id="CHEBI:58210"/>
    </cofactor>
    <text evidence="1">Binds 1 FMN per subunit.</text>
</comment>
<comment type="pathway">
    <text evidence="1">Cofactor metabolism; pyridoxal 5'-phosphate salvage; pyridoxal 5'-phosphate from pyridoxamine 5'-phosphate: step 1/1.</text>
</comment>
<comment type="pathway">
    <text evidence="1">Cofactor metabolism; pyridoxal 5'-phosphate salvage; pyridoxal 5'-phosphate from pyridoxine 5'-phosphate: step 1/1.</text>
</comment>
<comment type="subunit">
    <text evidence="1">Homodimer.</text>
</comment>
<comment type="similarity">
    <text evidence="1">Belongs to the pyridoxamine 5'-phosphate oxidase family.</text>
</comment>
<proteinExistence type="inferred from homology"/>
<dbReference type="EC" id="1.4.3.5" evidence="1"/>
<dbReference type="EMBL" id="CP000510">
    <property type="protein sequence ID" value="ABM03297.1"/>
    <property type="molecule type" value="Genomic_DNA"/>
</dbReference>
<dbReference type="RefSeq" id="WP_011769857.1">
    <property type="nucleotide sequence ID" value="NC_008709.1"/>
</dbReference>
<dbReference type="SMR" id="A1SUY2"/>
<dbReference type="STRING" id="357804.Ping_1481"/>
<dbReference type="KEGG" id="pin:Ping_1481"/>
<dbReference type="eggNOG" id="COG0259">
    <property type="taxonomic scope" value="Bacteria"/>
</dbReference>
<dbReference type="HOGENOM" id="CLU_032263_2_2_6"/>
<dbReference type="OrthoDB" id="9780392at2"/>
<dbReference type="UniPathway" id="UPA01068">
    <property type="reaction ID" value="UER00304"/>
</dbReference>
<dbReference type="UniPathway" id="UPA01068">
    <property type="reaction ID" value="UER00305"/>
</dbReference>
<dbReference type="Proteomes" id="UP000000639">
    <property type="component" value="Chromosome"/>
</dbReference>
<dbReference type="GO" id="GO:0010181">
    <property type="term" value="F:FMN binding"/>
    <property type="evidence" value="ECO:0007669"/>
    <property type="project" value="UniProtKB-UniRule"/>
</dbReference>
<dbReference type="GO" id="GO:0004733">
    <property type="term" value="F:pyridoxamine phosphate oxidase activity"/>
    <property type="evidence" value="ECO:0007669"/>
    <property type="project" value="UniProtKB-UniRule"/>
</dbReference>
<dbReference type="GO" id="GO:0008615">
    <property type="term" value="P:pyridoxine biosynthetic process"/>
    <property type="evidence" value="ECO:0007669"/>
    <property type="project" value="UniProtKB-KW"/>
</dbReference>
<dbReference type="FunFam" id="2.30.110.10:FF:000020">
    <property type="entry name" value="PNPO isoform 11"/>
    <property type="match status" value="1"/>
</dbReference>
<dbReference type="Gene3D" id="2.30.110.10">
    <property type="entry name" value="Electron Transport, Fmn-binding Protein, Chain A"/>
    <property type="match status" value="1"/>
</dbReference>
<dbReference type="HAMAP" id="MF_01629">
    <property type="entry name" value="PdxH"/>
    <property type="match status" value="1"/>
</dbReference>
<dbReference type="InterPro" id="IPR000659">
    <property type="entry name" value="Pyridox_Oxase"/>
</dbReference>
<dbReference type="InterPro" id="IPR019740">
    <property type="entry name" value="Pyridox_Oxase_CS"/>
</dbReference>
<dbReference type="InterPro" id="IPR011576">
    <property type="entry name" value="Pyridox_Oxase_N"/>
</dbReference>
<dbReference type="InterPro" id="IPR019576">
    <property type="entry name" value="Pyridoxamine_oxidase_dimer_C"/>
</dbReference>
<dbReference type="InterPro" id="IPR012349">
    <property type="entry name" value="Split_barrel_FMN-bd"/>
</dbReference>
<dbReference type="NCBIfam" id="TIGR00558">
    <property type="entry name" value="pdxH"/>
    <property type="match status" value="1"/>
</dbReference>
<dbReference type="NCBIfam" id="NF004231">
    <property type="entry name" value="PRK05679.1"/>
    <property type="match status" value="1"/>
</dbReference>
<dbReference type="PANTHER" id="PTHR10851:SF0">
    <property type="entry name" value="PYRIDOXINE-5'-PHOSPHATE OXIDASE"/>
    <property type="match status" value="1"/>
</dbReference>
<dbReference type="PANTHER" id="PTHR10851">
    <property type="entry name" value="PYRIDOXINE-5-PHOSPHATE OXIDASE"/>
    <property type="match status" value="1"/>
</dbReference>
<dbReference type="Pfam" id="PF10590">
    <property type="entry name" value="PNP_phzG_C"/>
    <property type="match status" value="1"/>
</dbReference>
<dbReference type="Pfam" id="PF01243">
    <property type="entry name" value="PNPOx_N"/>
    <property type="match status" value="1"/>
</dbReference>
<dbReference type="PIRSF" id="PIRSF000190">
    <property type="entry name" value="Pyd_amn-ph_oxd"/>
    <property type="match status" value="1"/>
</dbReference>
<dbReference type="SUPFAM" id="SSF50475">
    <property type="entry name" value="FMN-binding split barrel"/>
    <property type="match status" value="1"/>
</dbReference>
<dbReference type="PROSITE" id="PS01064">
    <property type="entry name" value="PYRIDOX_OXIDASE"/>
    <property type="match status" value="1"/>
</dbReference>
<protein>
    <recommendedName>
        <fullName evidence="1">Pyridoxine/pyridoxamine 5'-phosphate oxidase</fullName>
        <ecNumber evidence="1">1.4.3.5</ecNumber>
    </recommendedName>
    <alternativeName>
        <fullName evidence="1">PNP/PMP oxidase</fullName>
        <shortName evidence="1">PNPOx</shortName>
    </alternativeName>
    <alternativeName>
        <fullName evidence="1">Pyridoxal 5'-phosphate synthase</fullName>
    </alternativeName>
</protein>
<name>PDXH_PSYIN</name>
<keyword id="KW-0285">Flavoprotein</keyword>
<keyword id="KW-0288">FMN</keyword>
<keyword id="KW-0560">Oxidoreductase</keyword>
<keyword id="KW-0664">Pyridoxine biosynthesis</keyword>
<keyword id="KW-1185">Reference proteome</keyword>
<evidence type="ECO:0000255" key="1">
    <source>
        <dbReference type="HAMAP-Rule" id="MF_01629"/>
    </source>
</evidence>
<sequence length="217" mass="25178">MSFISKIRCAFTLGQGVLIENEALKETNDPILFFNNWLKKAQDTGIILPESMSISTCTPEGRPSSRMVLLKEVDSKGFVFFTNYDSRKAHDLEANPFAALLFHWNILQRQVRIEGRVERISTAQSNAYFQSRGRGSRIGAWASHQSQELNDRQTLVERVKYFEEKFAGKEIPLPEFWGGYRVIPESIEFWQGKADRLHDRFVYQPTEKNWTVKRLNP</sequence>
<organism>
    <name type="scientific">Psychromonas ingrahamii (strain DSM 17664 / CCUG 51855 / 37)</name>
    <dbReference type="NCBI Taxonomy" id="357804"/>
    <lineage>
        <taxon>Bacteria</taxon>
        <taxon>Pseudomonadati</taxon>
        <taxon>Pseudomonadota</taxon>
        <taxon>Gammaproteobacteria</taxon>
        <taxon>Alteromonadales</taxon>
        <taxon>Psychromonadaceae</taxon>
        <taxon>Psychromonas</taxon>
    </lineage>
</organism>
<gene>
    <name evidence="1" type="primary">pdxH</name>
    <name type="ordered locus">Ping_1481</name>
</gene>
<reference key="1">
    <citation type="journal article" date="2008" name="BMC Genomics">
        <title>Genomics of an extreme psychrophile, Psychromonas ingrahamii.</title>
        <authorList>
            <person name="Riley M."/>
            <person name="Staley J.T."/>
            <person name="Danchin A."/>
            <person name="Wang T.Z."/>
            <person name="Brettin T.S."/>
            <person name="Hauser L.J."/>
            <person name="Land M.L."/>
            <person name="Thompson L.S."/>
        </authorList>
    </citation>
    <scope>NUCLEOTIDE SEQUENCE [LARGE SCALE GENOMIC DNA]</scope>
    <source>
        <strain>DSM 17664 / CCUG 51855 / 37</strain>
    </source>
</reference>